<gene>
    <name type="primary">eif6</name>
    <name type="ordered locus">NEQ517</name>
</gene>
<keyword id="KW-0396">Initiation factor</keyword>
<keyword id="KW-0648">Protein biosynthesis</keyword>
<keyword id="KW-1185">Reference proteome</keyword>
<proteinExistence type="inferred from homology"/>
<reference key="1">
    <citation type="journal article" date="2003" name="Proc. Natl. Acad. Sci. U.S.A.">
        <title>The genome of Nanoarchaeum equitans: insights into early archaeal evolution and derived parasitism.</title>
        <authorList>
            <person name="Waters E."/>
            <person name="Hohn M.J."/>
            <person name="Ahel I."/>
            <person name="Graham D.E."/>
            <person name="Adams M.D."/>
            <person name="Barnstead M."/>
            <person name="Beeson K.Y."/>
            <person name="Bibbs L."/>
            <person name="Bolanos R."/>
            <person name="Keller M."/>
            <person name="Kretz K."/>
            <person name="Lin X."/>
            <person name="Mathur E."/>
            <person name="Ni J."/>
            <person name="Podar M."/>
            <person name="Richardson T."/>
            <person name="Sutton G.G."/>
            <person name="Simon M."/>
            <person name="Soell D."/>
            <person name="Stetter K.O."/>
            <person name="Short J.M."/>
            <person name="Noorderwier M."/>
        </authorList>
    </citation>
    <scope>NUCLEOTIDE SEQUENCE [LARGE SCALE GENOMIC DNA]</scope>
    <source>
        <strain>Kin4-M</strain>
    </source>
</reference>
<sequence>MRVNKIKIYGSDSIGLFGYIANDIAVLSEVISKEEEKIIKDTLGLEGIVKTTIAGTPTVGSFIIGKKDLIIVPSSIYEEELKKLEELFRVEVVDVVNNALGNNYYYWPKKNLLFAAEDTKKEAKLLAKKLNADLYLIDTDIEVGSSLIGNSKMLLHNPDIYIDIEDAKPVTLNMGDKFVGAAALLNDKGIVVGSKTTGIELIELQDLF</sequence>
<accession>Q74MW8</accession>
<feature type="chain" id="PRO_0000153751" description="Translation initiation factor 6">
    <location>
        <begin position="1"/>
        <end position="208"/>
    </location>
</feature>
<protein>
    <recommendedName>
        <fullName>Translation initiation factor 6</fullName>
        <shortName>aIF-6</shortName>
    </recommendedName>
</protein>
<name>IF6_NANEQ</name>
<organism>
    <name type="scientific">Nanoarchaeum equitans (strain Kin4-M)</name>
    <dbReference type="NCBI Taxonomy" id="228908"/>
    <lineage>
        <taxon>Archaea</taxon>
        <taxon>Nanobdellota</taxon>
        <taxon>Candidatus Nanoarchaeia</taxon>
        <taxon>Nanoarchaeales</taxon>
        <taxon>Nanoarchaeaceae</taxon>
        <taxon>Nanoarchaeum</taxon>
    </lineage>
</organism>
<comment type="function">
    <text evidence="1">Binds to the 50S ribosomal subunit and prevents its association with the 30S ribosomal subunit to form the 70S initiation complex.</text>
</comment>
<comment type="similarity">
    <text evidence="2">Belongs to the eIF-6 family.</text>
</comment>
<dbReference type="EMBL" id="AE017199">
    <property type="protein sequence ID" value="AAR39359.1"/>
    <property type="molecule type" value="Genomic_DNA"/>
</dbReference>
<dbReference type="SMR" id="Q74MW8"/>
<dbReference type="STRING" id="228908.NEQ517"/>
<dbReference type="EnsemblBacteria" id="AAR39359">
    <property type="protein sequence ID" value="AAR39359"/>
    <property type="gene ID" value="NEQ517"/>
</dbReference>
<dbReference type="KEGG" id="neq:NEQ517"/>
<dbReference type="HOGENOM" id="CLU_071894_1_0_2"/>
<dbReference type="Proteomes" id="UP000000578">
    <property type="component" value="Chromosome"/>
</dbReference>
<dbReference type="GO" id="GO:0043022">
    <property type="term" value="F:ribosome binding"/>
    <property type="evidence" value="ECO:0007669"/>
    <property type="project" value="InterPro"/>
</dbReference>
<dbReference type="GO" id="GO:0003743">
    <property type="term" value="F:translation initiation factor activity"/>
    <property type="evidence" value="ECO:0007669"/>
    <property type="project" value="UniProtKB-KW"/>
</dbReference>
<dbReference type="GO" id="GO:0042256">
    <property type="term" value="P:cytosolic ribosome assembly"/>
    <property type="evidence" value="ECO:0007669"/>
    <property type="project" value="InterPro"/>
</dbReference>
<dbReference type="Gene3D" id="3.75.10.10">
    <property type="entry name" value="L-arginine/glycine Amidinotransferase, Chain A"/>
    <property type="match status" value="1"/>
</dbReference>
<dbReference type="InterPro" id="IPR002769">
    <property type="entry name" value="eIF6"/>
</dbReference>
<dbReference type="PANTHER" id="PTHR10784">
    <property type="entry name" value="TRANSLATION INITIATION FACTOR 6"/>
    <property type="match status" value="1"/>
</dbReference>
<dbReference type="Pfam" id="PF01912">
    <property type="entry name" value="eIF-6"/>
    <property type="match status" value="1"/>
</dbReference>
<dbReference type="SMART" id="SM00654">
    <property type="entry name" value="eIF6"/>
    <property type="match status" value="1"/>
</dbReference>
<dbReference type="SUPFAM" id="SSF55909">
    <property type="entry name" value="Pentein"/>
    <property type="match status" value="1"/>
</dbReference>
<evidence type="ECO:0000250" key="1"/>
<evidence type="ECO:0000305" key="2"/>